<dbReference type="EMBL" id="U20618">
    <property type="protein sequence ID" value="AAB64530.1"/>
    <property type="molecule type" value="Genomic_DNA"/>
</dbReference>
<dbReference type="PIR" id="S69309">
    <property type="entry name" value="S69309"/>
</dbReference>
<dbReference type="DIP" id="DIP-2136N"/>
<dbReference type="PaxDb" id="4932-YLR317W"/>
<dbReference type="EnsemblFungi" id="YLR317W_mRNA">
    <property type="protein sequence ID" value="YLR317W"/>
    <property type="gene ID" value="YLR317W"/>
</dbReference>
<dbReference type="AGR" id="SGD:S000004309"/>
<dbReference type="SGD" id="S000004309">
    <property type="gene designation" value="YLR317W"/>
</dbReference>
<dbReference type="HOGENOM" id="CLU_1797960_0_0_1"/>
<organism>
    <name type="scientific">Saccharomyces cerevisiae (strain ATCC 204508 / S288c)</name>
    <name type="common">Baker's yeast</name>
    <dbReference type="NCBI Taxonomy" id="559292"/>
    <lineage>
        <taxon>Eukaryota</taxon>
        <taxon>Fungi</taxon>
        <taxon>Dikarya</taxon>
        <taxon>Ascomycota</taxon>
        <taxon>Saccharomycotina</taxon>
        <taxon>Saccharomycetes</taxon>
        <taxon>Saccharomycetales</taxon>
        <taxon>Saccharomycetaceae</taxon>
        <taxon>Saccharomyces</taxon>
    </lineage>
</organism>
<accession>O13553</accession>
<gene>
    <name type="ordered locus">YLR317W</name>
</gene>
<feature type="chain" id="PRO_0000299636" description="Putative uncharacterized protein YLR317W">
    <location>
        <begin position="1"/>
        <end position="144"/>
    </location>
</feature>
<evidence type="ECO:0000305" key="1"/>
<evidence type="ECO:0000305" key="2">
    <source>
    </source>
</evidence>
<reference key="1">
    <citation type="journal article" date="1997" name="Nature">
        <title>The nucleotide sequence of Saccharomyces cerevisiae chromosome XII.</title>
        <authorList>
            <person name="Johnston M."/>
            <person name="Hillier L.W."/>
            <person name="Riles L."/>
            <person name="Albermann K."/>
            <person name="Andre B."/>
            <person name="Ansorge W."/>
            <person name="Benes V."/>
            <person name="Brueckner M."/>
            <person name="Delius H."/>
            <person name="Dubois E."/>
            <person name="Duesterhoeft A."/>
            <person name="Entian K.-D."/>
            <person name="Floeth M."/>
            <person name="Goffeau A."/>
            <person name="Hebling U."/>
            <person name="Heumann K."/>
            <person name="Heuss-Neitzel D."/>
            <person name="Hilbert H."/>
            <person name="Hilger F."/>
            <person name="Kleine K."/>
            <person name="Koetter P."/>
            <person name="Louis E.J."/>
            <person name="Messenguy F."/>
            <person name="Mewes H.-W."/>
            <person name="Miosga T."/>
            <person name="Moestl D."/>
            <person name="Mueller-Auer S."/>
            <person name="Nentwich U."/>
            <person name="Obermaier B."/>
            <person name="Piravandi E."/>
            <person name="Pohl T.M."/>
            <person name="Portetelle D."/>
            <person name="Purnelle B."/>
            <person name="Rechmann S."/>
            <person name="Rieger M."/>
            <person name="Rinke M."/>
            <person name="Rose M."/>
            <person name="Scharfe M."/>
            <person name="Scherens B."/>
            <person name="Scholler P."/>
            <person name="Schwager C."/>
            <person name="Schwarz S."/>
            <person name="Underwood A.P."/>
            <person name="Urrestarazu L.A."/>
            <person name="Vandenbol M."/>
            <person name="Verhasselt P."/>
            <person name="Vierendeels F."/>
            <person name="Voet M."/>
            <person name="Volckaert G."/>
            <person name="Voss H."/>
            <person name="Wambutt R."/>
            <person name="Wedler E."/>
            <person name="Wedler H."/>
            <person name="Zimmermann F.K."/>
            <person name="Zollner A."/>
            <person name="Hani J."/>
            <person name="Hoheisel J.D."/>
        </authorList>
    </citation>
    <scope>NUCLEOTIDE SEQUENCE [LARGE SCALE GENOMIC DNA]</scope>
    <source>
        <strain>ATCC 204508 / S288c</strain>
    </source>
</reference>
<reference key="2">
    <citation type="journal article" date="2014" name="G3 (Bethesda)">
        <title>The reference genome sequence of Saccharomyces cerevisiae: Then and now.</title>
        <authorList>
            <person name="Engel S.R."/>
            <person name="Dietrich F.S."/>
            <person name="Fisk D.G."/>
            <person name="Binkley G."/>
            <person name="Balakrishnan R."/>
            <person name="Costanzo M.C."/>
            <person name="Dwight S.S."/>
            <person name="Hitz B.C."/>
            <person name="Karra K."/>
            <person name="Nash R.S."/>
            <person name="Weng S."/>
            <person name="Wong E.D."/>
            <person name="Lloyd P."/>
            <person name="Skrzypek M.S."/>
            <person name="Miyasato S.R."/>
            <person name="Simison M."/>
            <person name="Cherry J.M."/>
        </authorList>
    </citation>
    <scope>GENOME REANNOTATION</scope>
    <source>
        <strain>ATCC 204508 / S288c</strain>
    </source>
</reference>
<protein>
    <recommendedName>
        <fullName>Putative uncharacterized protein YLR317W</fullName>
    </recommendedName>
</protein>
<comment type="miscellaneous">
    <text evidence="1">Overlaps TAD3.</text>
</comment>
<comment type="caution">
    <text evidence="2">Product of a dubious gene prediction unlikely to encode a functional protein. Because of that it is not part of the S.cerevisiae S288c complete/reference proteome set.</text>
</comment>
<sequence length="144" mass="16673">MGQQRRSPLETVFLPLPSSQTTSTHAIAHFVLPACLFYSRSIFDHWGCRSKSTASTSQTRHCSVPLCWAQTQALRYHHSVHTFSFQPKYSSIYCLFHLRRKYTLSNTTPLPRWRSRCPCGSFSNVSMKQGHFSENRFELAYFTS</sequence>
<name>YL317_YEAST</name>
<proteinExistence type="uncertain"/>